<reference key="1">
    <citation type="submission" date="1998-02" db="EMBL/GenBank/DDBJ databases">
        <title>Chick embryonic ventricular myocytes VEGF.</title>
        <authorList>
            <person name="Takahashi T."/>
        </authorList>
    </citation>
    <scope>NUCLEOTIDE SEQUENCE [MRNA]</scope>
    <source>
        <tissue>Heart</tissue>
    </source>
</reference>
<accession>P67964</accession>
<accession>P52582</accession>
<accession>Q91420</accession>
<feature type="signal peptide" evidence="1">
    <location>
        <begin position="1"/>
        <end position="26"/>
    </location>
</feature>
<feature type="chain" id="PRO_0000023392" description="Vascular endothelial growth factor A">
    <location>
        <begin position="27"/>
        <end position="216"/>
    </location>
</feature>
<feature type="region of interest" description="Disordered" evidence="5">
    <location>
        <begin position="132"/>
        <end position="167"/>
    </location>
</feature>
<feature type="compositionally biased region" description="Basic and acidic residues" evidence="5">
    <location>
        <begin position="132"/>
        <end position="141"/>
    </location>
</feature>
<feature type="compositionally biased region" description="Basic residues" evidence="5">
    <location>
        <begin position="142"/>
        <end position="161"/>
    </location>
</feature>
<feature type="glycosylation site" description="N-linked (GlcNAc...) asparagine" evidence="4">
    <location>
        <position position="101"/>
    </location>
</feature>
<feature type="disulfide bond" evidence="1">
    <location>
        <begin position="52"/>
        <end position="94"/>
    </location>
</feature>
<feature type="disulfide bond" description="Interchain" evidence="1">
    <location>
        <position position="77"/>
    </location>
</feature>
<feature type="disulfide bond" evidence="1">
    <location>
        <begin position="83"/>
        <end position="128"/>
    </location>
</feature>
<feature type="disulfide bond" description="Interchain" evidence="1">
    <location>
        <position position="86"/>
    </location>
</feature>
<feature type="disulfide bond" evidence="1">
    <location>
        <begin position="87"/>
        <end position="130"/>
    </location>
</feature>
<sequence>MNFLLTWIHWGLAALLYLQSAELSKAAPALGDGERKPNEVIKFLEVYERSFCRTIETLVDIFQEYPDEVEYIFRPSCVPLMRCAGCCGDEGLECVPVDVYNVTMEIARIKPHQSQHIAHMSFLQHSKCDCRPKKDVKNKQEKKSKRGKGKGQKRKRKKGRYKPPSFHCEPCSERRKHLFVQDPQTCKCSCKFTDSRCKSRQLELNERTCRCEKPRR</sequence>
<name>VEGFA_CHICK</name>
<organism>
    <name type="scientific">Gallus gallus</name>
    <name type="common">Chicken</name>
    <dbReference type="NCBI Taxonomy" id="9031"/>
    <lineage>
        <taxon>Eukaryota</taxon>
        <taxon>Metazoa</taxon>
        <taxon>Chordata</taxon>
        <taxon>Craniata</taxon>
        <taxon>Vertebrata</taxon>
        <taxon>Euteleostomi</taxon>
        <taxon>Archelosauria</taxon>
        <taxon>Archosauria</taxon>
        <taxon>Dinosauria</taxon>
        <taxon>Saurischia</taxon>
        <taxon>Theropoda</taxon>
        <taxon>Coelurosauria</taxon>
        <taxon>Aves</taxon>
        <taxon>Neognathae</taxon>
        <taxon>Galloanserae</taxon>
        <taxon>Galliformes</taxon>
        <taxon>Phasianidae</taxon>
        <taxon>Phasianinae</taxon>
        <taxon>Gallus</taxon>
    </lineage>
</organism>
<evidence type="ECO:0000250" key="1"/>
<evidence type="ECO:0000250" key="2">
    <source>
        <dbReference type="UniProtKB" id="P15692"/>
    </source>
</evidence>
<evidence type="ECO:0000250" key="3">
    <source>
        <dbReference type="UniProtKB" id="P16612"/>
    </source>
</evidence>
<evidence type="ECO:0000255" key="4"/>
<evidence type="ECO:0000256" key="5">
    <source>
        <dbReference type="SAM" id="MobiDB-lite"/>
    </source>
</evidence>
<evidence type="ECO:0000305" key="6"/>
<dbReference type="EMBL" id="AB011078">
    <property type="protein sequence ID" value="BAA24925.1"/>
    <property type="molecule type" value="mRNA"/>
</dbReference>
<dbReference type="RefSeq" id="NP_001103825.1">
    <property type="nucleotide sequence ID" value="NM_001110355.1"/>
</dbReference>
<dbReference type="RefSeq" id="NP_990373.1">
    <property type="nucleotide sequence ID" value="NM_205042.3"/>
</dbReference>
<dbReference type="SMR" id="P67964"/>
<dbReference type="FunCoup" id="P67964">
    <property type="interactions" value="431"/>
</dbReference>
<dbReference type="STRING" id="9031.ENSGALP00000066335"/>
<dbReference type="GlyCosmos" id="P67964">
    <property type="glycosylation" value="1 site, No reported glycans"/>
</dbReference>
<dbReference type="GlyGen" id="P67964">
    <property type="glycosylation" value="1 site"/>
</dbReference>
<dbReference type="PaxDb" id="9031-ENSGALP00000016723"/>
<dbReference type="GeneID" id="395909"/>
<dbReference type="KEGG" id="gga:395909"/>
<dbReference type="CTD" id="7422"/>
<dbReference type="VEuPathDB" id="HostDB:geneid_395909"/>
<dbReference type="eggNOG" id="ENOG502QVI8">
    <property type="taxonomic scope" value="Eukaryota"/>
</dbReference>
<dbReference type="HOGENOM" id="CLU_042996_2_0_1"/>
<dbReference type="InParanoid" id="P67964"/>
<dbReference type="OMA" id="HDLECEC"/>
<dbReference type="OrthoDB" id="6370328at2759"/>
<dbReference type="PhylomeDB" id="P67964"/>
<dbReference type="PRO" id="PR:P67964"/>
<dbReference type="Proteomes" id="UP000000539">
    <property type="component" value="Unassembled WGS sequence"/>
</dbReference>
<dbReference type="GO" id="GO:0005615">
    <property type="term" value="C:extracellular space"/>
    <property type="evidence" value="ECO:0000318"/>
    <property type="project" value="GO_Central"/>
</dbReference>
<dbReference type="GO" id="GO:0016020">
    <property type="term" value="C:membrane"/>
    <property type="evidence" value="ECO:0007669"/>
    <property type="project" value="InterPro"/>
</dbReference>
<dbReference type="GO" id="GO:0042056">
    <property type="term" value="F:chemoattractant activity"/>
    <property type="evidence" value="ECO:0000318"/>
    <property type="project" value="GO_Central"/>
</dbReference>
<dbReference type="GO" id="GO:0008083">
    <property type="term" value="F:growth factor activity"/>
    <property type="evidence" value="ECO:0000318"/>
    <property type="project" value="GO_Central"/>
</dbReference>
<dbReference type="GO" id="GO:0008201">
    <property type="term" value="F:heparin binding"/>
    <property type="evidence" value="ECO:0007669"/>
    <property type="project" value="UniProtKB-KW"/>
</dbReference>
<dbReference type="GO" id="GO:0005172">
    <property type="term" value="F:vascular endothelial growth factor receptor binding"/>
    <property type="evidence" value="ECO:0000318"/>
    <property type="project" value="GO_Central"/>
</dbReference>
<dbReference type="GO" id="GO:0001955">
    <property type="term" value="P:blood vessel maturation"/>
    <property type="evidence" value="ECO:0000250"/>
    <property type="project" value="Roslin"/>
</dbReference>
<dbReference type="GO" id="GO:0003347">
    <property type="term" value="P:epicardial cell to mesenchymal cell transition"/>
    <property type="evidence" value="ECO:0000304"/>
    <property type="project" value="DFLAT"/>
</dbReference>
<dbReference type="GO" id="GO:0050930">
    <property type="term" value="P:induction of positive chemotaxis"/>
    <property type="evidence" value="ECO:0000318"/>
    <property type="project" value="GO_Central"/>
</dbReference>
<dbReference type="GO" id="GO:0045766">
    <property type="term" value="P:positive regulation of angiogenesis"/>
    <property type="evidence" value="ECO:0000250"/>
    <property type="project" value="Roslin"/>
</dbReference>
<dbReference type="GO" id="GO:0051781">
    <property type="term" value="P:positive regulation of cell division"/>
    <property type="evidence" value="ECO:0007669"/>
    <property type="project" value="UniProtKB-KW"/>
</dbReference>
<dbReference type="GO" id="GO:0001938">
    <property type="term" value="P:positive regulation of endothelial cell proliferation"/>
    <property type="evidence" value="ECO:0000250"/>
    <property type="project" value="UniProtKB"/>
</dbReference>
<dbReference type="GO" id="GO:0051894">
    <property type="term" value="P:positive regulation of focal adhesion assembly"/>
    <property type="evidence" value="ECO:0000250"/>
    <property type="project" value="UniProtKB"/>
</dbReference>
<dbReference type="GO" id="GO:0060754">
    <property type="term" value="P:positive regulation of mast cell chemotaxis"/>
    <property type="evidence" value="ECO:0000318"/>
    <property type="project" value="GO_Central"/>
</dbReference>
<dbReference type="GO" id="GO:0050731">
    <property type="term" value="P:positive regulation of peptidyl-tyrosine phosphorylation"/>
    <property type="evidence" value="ECO:0000250"/>
    <property type="project" value="UniProtKB"/>
</dbReference>
<dbReference type="GO" id="GO:0031334">
    <property type="term" value="P:positive regulation of protein-containing complex assembly"/>
    <property type="evidence" value="ECO:0000250"/>
    <property type="project" value="UniProtKB"/>
</dbReference>
<dbReference type="GO" id="GO:0043117">
    <property type="term" value="P:positive regulation of vascular permeability"/>
    <property type="evidence" value="ECO:0000250"/>
    <property type="project" value="Roslin"/>
</dbReference>
<dbReference type="GO" id="GO:0001666">
    <property type="term" value="P:response to hypoxia"/>
    <property type="evidence" value="ECO:0000318"/>
    <property type="project" value="GO_Central"/>
</dbReference>
<dbReference type="GO" id="GO:0002040">
    <property type="term" value="P:sprouting angiogenesis"/>
    <property type="evidence" value="ECO:0000318"/>
    <property type="project" value="GO_Central"/>
</dbReference>
<dbReference type="GO" id="GO:0048010">
    <property type="term" value="P:vascular endothelial growth factor receptor signaling pathway"/>
    <property type="evidence" value="ECO:0000318"/>
    <property type="project" value="GO_Central"/>
</dbReference>
<dbReference type="GO" id="GO:0038084">
    <property type="term" value="P:vascular endothelial growth factor signaling pathway"/>
    <property type="evidence" value="ECO:0000318"/>
    <property type="project" value="GO_Central"/>
</dbReference>
<dbReference type="CDD" id="cd00135">
    <property type="entry name" value="PDGF"/>
    <property type="match status" value="1"/>
</dbReference>
<dbReference type="FunFam" id="2.10.160.10:FF:000001">
    <property type="entry name" value="Vascular endothelial growth factor A"/>
    <property type="match status" value="1"/>
</dbReference>
<dbReference type="FunFam" id="2.10.90.10:FF:000009">
    <property type="entry name" value="Vascular endothelial growth factor A"/>
    <property type="match status" value="1"/>
</dbReference>
<dbReference type="Gene3D" id="2.10.90.10">
    <property type="entry name" value="Cystine-knot cytokines"/>
    <property type="match status" value="1"/>
</dbReference>
<dbReference type="Gene3D" id="2.10.160.10">
    <property type="entry name" value="Vascular endothelial growth factor, heparin-binding domain"/>
    <property type="match status" value="1"/>
</dbReference>
<dbReference type="InterPro" id="IPR029034">
    <property type="entry name" value="Cystine-knot_cytokine"/>
</dbReference>
<dbReference type="InterPro" id="IPR023581">
    <property type="entry name" value="PD_growth_factor_CS"/>
</dbReference>
<dbReference type="InterPro" id="IPR000072">
    <property type="entry name" value="PDGF/VEGF_dom"/>
</dbReference>
<dbReference type="InterPro" id="IPR050507">
    <property type="entry name" value="PDGF/VEGF_growth_factor"/>
</dbReference>
<dbReference type="InterPro" id="IPR027928">
    <property type="entry name" value="VEGF_C"/>
</dbReference>
<dbReference type="InterPro" id="IPR036841">
    <property type="entry name" value="VEGF_C_sf"/>
</dbReference>
<dbReference type="PANTHER" id="PTHR12025">
    <property type="entry name" value="VASCULAR ENDOTHELIAL GROWTH FACTOR"/>
    <property type="match status" value="1"/>
</dbReference>
<dbReference type="PANTHER" id="PTHR12025:SF5">
    <property type="entry name" value="VASCULAR ENDOTHELIAL GROWTH FACTOR A, LONG FORM"/>
    <property type="match status" value="1"/>
</dbReference>
<dbReference type="Pfam" id="PF00341">
    <property type="entry name" value="PDGF"/>
    <property type="match status" value="1"/>
</dbReference>
<dbReference type="Pfam" id="PF14554">
    <property type="entry name" value="VEGF_C"/>
    <property type="match status" value="1"/>
</dbReference>
<dbReference type="SMART" id="SM00141">
    <property type="entry name" value="PDGF"/>
    <property type="match status" value="1"/>
</dbReference>
<dbReference type="SUPFAM" id="SSF57501">
    <property type="entry name" value="Cystine-knot cytokines"/>
    <property type="match status" value="1"/>
</dbReference>
<dbReference type="SUPFAM" id="SSF57593">
    <property type="entry name" value="Heparin-binding domain from vascular endothelial growth factor"/>
    <property type="match status" value="1"/>
</dbReference>
<dbReference type="PROSITE" id="PS00249">
    <property type="entry name" value="PDGF_1"/>
    <property type="match status" value="1"/>
</dbReference>
<dbReference type="PROSITE" id="PS50278">
    <property type="entry name" value="PDGF_2"/>
    <property type="match status" value="1"/>
</dbReference>
<proteinExistence type="evidence at transcript level"/>
<gene>
    <name type="primary">VEGFA</name>
    <name type="synonym">VEGF</name>
</gene>
<comment type="function">
    <text evidence="2">Growth factor active in angiogenesis, vasculogenesis and endothelial cell growth. Induces endothelial cell proliferation, promotes cell migration, inhibits apoptosis and induces permeabilization of blood vessels. Binds to the FLT1/VEGFR1 and KDR/VEGFR2 receptors, heparan sulfate and heparin (By similarity).</text>
</comment>
<comment type="subunit">
    <text evidence="3">Homodimer; disulfide-linked (By similarity). Also found as heterodimer with PGF (By similarity).</text>
</comment>
<comment type="similarity">
    <text evidence="6">Belongs to the PDGF/VEGF growth factor family.</text>
</comment>
<protein>
    <recommendedName>
        <fullName>Vascular endothelial growth factor A</fullName>
        <shortName>VEGF-A</shortName>
    </recommendedName>
    <alternativeName>
        <fullName>Vascular permeability factor</fullName>
        <shortName>VPF</shortName>
    </alternativeName>
</protein>
<keyword id="KW-0037">Angiogenesis</keyword>
<keyword id="KW-0217">Developmental protein</keyword>
<keyword id="KW-0221">Differentiation</keyword>
<keyword id="KW-1015">Disulfide bond</keyword>
<keyword id="KW-0325">Glycoprotein</keyword>
<keyword id="KW-0339">Growth factor</keyword>
<keyword id="KW-0358">Heparin-binding</keyword>
<keyword id="KW-0497">Mitogen</keyword>
<keyword id="KW-1185">Reference proteome</keyword>
<keyword id="KW-0732">Signal</keyword>